<proteinExistence type="inferred from homology"/>
<keyword id="KW-0025">Alternative splicing</keyword>
<keyword id="KW-1015">Disulfide bond</keyword>
<keyword id="KW-0325">Glycoprotein</keyword>
<keyword id="KW-1032">Host cell membrane</keyword>
<keyword id="KW-1043">Host membrane</keyword>
<keyword id="KW-0945">Host-virus interaction</keyword>
<keyword id="KW-0375">Hydrogen ion transport</keyword>
<keyword id="KW-1083">Inhibition of host autophagy by virus</keyword>
<keyword id="KW-0407">Ion channel</keyword>
<keyword id="KW-0406">Ion transport</keyword>
<keyword id="KW-0449">Lipoprotein</keyword>
<keyword id="KW-0472">Membrane</keyword>
<keyword id="KW-0564">Palmitate</keyword>
<keyword id="KW-0597">Phosphoprotein</keyword>
<keyword id="KW-1185">Reference proteome</keyword>
<keyword id="KW-0735">Signal-anchor</keyword>
<keyword id="KW-0812">Transmembrane</keyword>
<keyword id="KW-1133">Transmembrane helix</keyword>
<keyword id="KW-0813">Transport</keyword>
<keyword id="KW-1182">Viral ion channel</keyword>
<keyword id="KW-0946">Virion</keyword>
<gene>
    <name evidence="1" type="primary">M</name>
</gene>
<sequence>MSLLTEVETPIRNEWGCRCNDSSDPLVVAASIIGILHLILWILDRLFFKCIYRFFEHGLKRGPSTEGVPESMREEYRKEQQSAVDADDSHFVSIELE</sequence>
<organismHost>
    <name type="scientific">Aves</name>
    <dbReference type="NCBI Taxonomy" id="8782"/>
</organismHost>
<organismHost>
    <name type="scientific">Cetacea</name>
    <name type="common">whales</name>
    <dbReference type="NCBI Taxonomy" id="9721"/>
</organismHost>
<organismHost>
    <name type="scientific">Homo sapiens</name>
    <name type="common">Human</name>
    <dbReference type="NCBI Taxonomy" id="9606"/>
</organismHost>
<organismHost>
    <name type="scientific">Phocidae</name>
    <name type="common">true seals</name>
    <dbReference type="NCBI Taxonomy" id="9709"/>
</organismHost>
<organismHost>
    <name type="scientific">Sus scrofa</name>
    <name type="common">Pig</name>
    <dbReference type="NCBI Taxonomy" id="9823"/>
</organismHost>
<comment type="function">
    <text evidence="1">Forms a proton-selective ion channel that is necessary for the efficient release of the viral genome during virus entry. After attaching to the cell surface, the virion enters the cell by endocytosis. Acidification of the endosome triggers M2 ion channel activity. The influx of protons into virion interior is believed to disrupt interactions between the viral ribonucleoprotein (RNP), matrix protein 1 (M1), and lipid bilayers, thereby freeing the viral genome from interaction with viral proteins and enabling RNA segments to migrate to the host cell nucleus, where influenza virus RNA transcription and replication occur. Also plays a role in viral proteins secretory pathway. Elevates the intravesicular pH of normally acidic compartments, such as trans-Golgi network, preventing newly formed hemagglutinin from premature switching to the fusion-active conformation.</text>
</comment>
<comment type="activity regulation">
    <text>The M2 protein from most influenza A strains is inhibited by amantadine and rimantadine, resulting in viral uncoating incapacity. Emergence of amantadine-resistant variants is usually rapid.</text>
</comment>
<comment type="subunit">
    <text evidence="1">Homotetramer; composed of two disulfide-linked dimers held together by non-covalent interactions. May interact with matrix protein 1.</text>
</comment>
<comment type="subcellular location">
    <subcellularLocation>
        <location evidence="1">Virion membrane</location>
    </subcellularLocation>
    <subcellularLocation>
        <location evidence="1">Host apical cell membrane</location>
        <topology evidence="1">Single-pass type III membrane protein</topology>
    </subcellularLocation>
    <text evidence="1">Abundantly expressed at the apical plasma membrane in infected polarized epithelial cells, in close proximity to budding and assembled virions. Minor component of virions (only 16-20 molecules/virion).</text>
</comment>
<comment type="alternative products">
    <event type="alternative splicing"/>
    <isoform>
        <id>Q76V12-1</id>
        <name>M2</name>
        <sequence type="displayed"/>
    </isoform>
    <isoform>
        <id>Q67157-1</id>
        <name>M1</name>
        <sequence type="external"/>
    </isoform>
    <text>Only the first 9 residues are shared by the 2 isoforms.</text>
</comment>
<comment type="domain">
    <text evidence="1">Cytoplasmic tail plays an important role in virion assembly and morphogenesis.</text>
</comment>
<comment type="miscellaneous">
    <text evidence="1">When the channel is activated, one or more imidazole moieties of His-37 probably become bi-protonated.</text>
</comment>
<comment type="similarity">
    <text evidence="1">Belongs to the influenza viruses matrix protein M2 family.</text>
</comment>
<evidence type="ECO:0000255" key="1">
    <source>
        <dbReference type="HAMAP-Rule" id="MF_04069"/>
    </source>
</evidence>
<evidence type="ECO:0000256" key="2">
    <source>
        <dbReference type="SAM" id="MobiDB-lite"/>
    </source>
</evidence>
<reference key="1">
    <citation type="journal article" date="1991" name="J. Virol.">
        <title>Evolutionary analysis of the influenza A virus M gene with comparison of the M1 and M2 proteins.</title>
        <authorList>
            <person name="Ito T."/>
            <person name="Gorman O.T."/>
            <person name="Kawaoka Y."/>
            <person name="Bean W.J."/>
            <person name="Webster R.G."/>
        </authorList>
    </citation>
    <scope>NUCLEOTIDE SEQUENCE [GENOMIC RNA]</scope>
</reference>
<protein>
    <recommendedName>
        <fullName evidence="1">Matrix protein 2</fullName>
    </recommendedName>
    <alternativeName>
        <fullName evidence="1">Proton channel protein M2</fullName>
    </alternativeName>
</protein>
<organism>
    <name type="scientific">Influenza A virus (strain A/Aichi/2/1968 H3N2)</name>
    <dbReference type="NCBI Taxonomy" id="387139"/>
    <lineage>
        <taxon>Viruses</taxon>
        <taxon>Riboviria</taxon>
        <taxon>Orthornavirae</taxon>
        <taxon>Negarnaviricota</taxon>
        <taxon>Polyploviricotina</taxon>
        <taxon>Insthoviricetes</taxon>
        <taxon>Articulavirales</taxon>
        <taxon>Orthomyxoviridae</taxon>
        <taxon>Alphainfluenzavirus</taxon>
        <taxon>Alphainfluenzavirus influenzae</taxon>
        <taxon>Influenza A virus</taxon>
    </lineage>
</organism>
<dbReference type="EMBL" id="M63515">
    <property type="protein sequence ID" value="AAA43276.1"/>
    <property type="molecule type" value="Genomic_RNA"/>
</dbReference>
<dbReference type="SMR" id="Q76V12"/>
<dbReference type="IntAct" id="Q76V12">
    <property type="interactions" value="1"/>
</dbReference>
<dbReference type="GlyCosmos" id="Q76V12">
    <property type="glycosylation" value="1 site, No reported glycans"/>
</dbReference>
<dbReference type="Proteomes" id="UP000137932">
    <property type="component" value="Genome"/>
</dbReference>
<dbReference type="GO" id="GO:0020002">
    <property type="term" value="C:host cell plasma membrane"/>
    <property type="evidence" value="ECO:0007669"/>
    <property type="project" value="UniProtKB-SubCell"/>
</dbReference>
<dbReference type="GO" id="GO:0016020">
    <property type="term" value="C:membrane"/>
    <property type="evidence" value="ECO:0007669"/>
    <property type="project" value="UniProtKB-UniRule"/>
</dbReference>
<dbReference type="GO" id="GO:0055036">
    <property type="term" value="C:virion membrane"/>
    <property type="evidence" value="ECO:0007669"/>
    <property type="project" value="UniProtKB-SubCell"/>
</dbReference>
<dbReference type="GO" id="GO:0005216">
    <property type="term" value="F:monoatomic ion channel activity"/>
    <property type="evidence" value="ECO:0007669"/>
    <property type="project" value="UniProtKB-UniRule"/>
</dbReference>
<dbReference type="GO" id="GO:0015078">
    <property type="term" value="F:proton transmembrane transporter activity"/>
    <property type="evidence" value="ECO:0007669"/>
    <property type="project" value="UniProtKB-UniRule"/>
</dbReference>
<dbReference type="GO" id="GO:0051259">
    <property type="term" value="P:protein complex oligomerization"/>
    <property type="evidence" value="ECO:0007669"/>
    <property type="project" value="UniProtKB-UniRule"/>
</dbReference>
<dbReference type="GO" id="GO:0044694">
    <property type="term" value="P:symbiont genome entry into host cell via pore formation in plasma membrane"/>
    <property type="evidence" value="ECO:0007669"/>
    <property type="project" value="UniProtKB-UniRule"/>
</dbReference>
<dbReference type="GO" id="GO:0140321">
    <property type="term" value="P:symbiont-mediated suppression of host autophagy"/>
    <property type="evidence" value="ECO:0007669"/>
    <property type="project" value="UniProtKB-KW"/>
</dbReference>
<dbReference type="Gene3D" id="6.10.250.1640">
    <property type="match status" value="1"/>
</dbReference>
<dbReference type="HAMAP" id="MF_04069">
    <property type="entry name" value="INFV_M2"/>
    <property type="match status" value="1"/>
</dbReference>
<dbReference type="InterPro" id="IPR002089">
    <property type="entry name" value="Flu_M2"/>
</dbReference>
<dbReference type="Pfam" id="PF00599">
    <property type="entry name" value="Flu_M2"/>
    <property type="match status" value="1"/>
</dbReference>
<name>M2_I68A0</name>
<feature type="chain" id="PRO_0000260833" description="Matrix protein 2">
    <location>
        <begin position="1"/>
        <end position="97"/>
    </location>
</feature>
<feature type="topological domain" description="Virion surface" evidence="1">
    <location>
        <begin position="1"/>
        <end position="22"/>
    </location>
</feature>
<feature type="transmembrane region" description="Helical; Signal-anchor for type III membrane protein" evidence="1">
    <location>
        <begin position="23"/>
        <end position="43"/>
    </location>
</feature>
<feature type="topological domain" description="Intravirion" evidence="1">
    <location>
        <begin position="44"/>
        <end position="97"/>
    </location>
</feature>
<feature type="region of interest" description="Disordered" evidence="2">
    <location>
        <begin position="60"/>
        <end position="88"/>
    </location>
</feature>
<feature type="compositionally biased region" description="Basic and acidic residues" evidence="2">
    <location>
        <begin position="71"/>
        <end position="80"/>
    </location>
</feature>
<feature type="site" description="Essential for channel activity, possibly by being protonated during channel activation, and by forming the channel gate and the selective filter" evidence="1">
    <location>
        <position position="37"/>
    </location>
</feature>
<feature type="site" description="Seems to be involved in pH gating" evidence="1">
    <location>
        <position position="41"/>
    </location>
</feature>
<feature type="modified residue" description="Phosphoserine; by host" evidence="1">
    <location>
        <position position="64"/>
    </location>
</feature>
<feature type="modified residue" description="Phosphoserine; by host" evidence="1">
    <location>
        <position position="82"/>
    </location>
</feature>
<feature type="modified residue" description="Phosphoserine; by host" evidence="1">
    <location>
        <position position="93"/>
    </location>
</feature>
<feature type="lipid moiety-binding region" description="S-palmitoyl cysteine; by host" evidence="1">
    <location>
        <position position="50"/>
    </location>
</feature>
<feature type="glycosylation site" description="N-linked (GlcNAc...) asparagine; by host" evidence="1">
    <location>
        <position position="20"/>
    </location>
</feature>
<feature type="disulfide bond" description="Interchain (with C-17)" evidence="1">
    <location>
        <position position="17"/>
    </location>
</feature>
<feature type="disulfide bond" description="Interchain (with C-19)" evidence="1">
    <location>
        <position position="19"/>
    </location>
</feature>
<accession>Q76V12</accession>